<evidence type="ECO:0000255" key="1">
    <source>
        <dbReference type="HAMAP-Rule" id="MF_00270"/>
    </source>
</evidence>
<evidence type="ECO:0000256" key="2">
    <source>
        <dbReference type="SAM" id="MobiDB-lite"/>
    </source>
</evidence>
<evidence type="ECO:0000305" key="3"/>
<feature type="chain" id="PRO_0000111180" description="Small ribosomal subunit protein bS18">
    <location>
        <begin position="1"/>
        <end position="105"/>
    </location>
</feature>
<feature type="region of interest" description="Disordered" evidence="2">
    <location>
        <begin position="1"/>
        <end position="34"/>
    </location>
</feature>
<feature type="compositionally biased region" description="Polar residues" evidence="2">
    <location>
        <begin position="9"/>
        <end position="23"/>
    </location>
</feature>
<reference key="1">
    <citation type="journal article" date="1995" name="Science">
        <title>The minimal gene complement of Mycoplasma genitalium.</title>
        <authorList>
            <person name="Fraser C.M."/>
            <person name="Gocayne J.D."/>
            <person name="White O."/>
            <person name="Adams M.D."/>
            <person name="Clayton R.A."/>
            <person name="Fleischmann R.D."/>
            <person name="Bult C.J."/>
            <person name="Kerlavage A.R."/>
            <person name="Sutton G.G."/>
            <person name="Kelley J.M."/>
            <person name="Fritchman J.L."/>
            <person name="Weidman J.F."/>
            <person name="Small K.V."/>
            <person name="Sandusky M."/>
            <person name="Fuhrmann J.L."/>
            <person name="Nguyen D.T."/>
            <person name="Utterback T.R."/>
            <person name="Saudek D.M."/>
            <person name="Phillips C.A."/>
            <person name="Merrick J.M."/>
            <person name="Tomb J.-F."/>
            <person name="Dougherty B.A."/>
            <person name="Bott K.F."/>
            <person name="Hu P.-C."/>
            <person name="Lucier T.S."/>
            <person name="Peterson S.N."/>
            <person name="Smith H.O."/>
            <person name="Hutchison C.A. III"/>
            <person name="Venter J.C."/>
        </authorList>
    </citation>
    <scope>NUCLEOTIDE SEQUENCE [LARGE SCALE GENOMIC DNA]</scope>
    <source>
        <strain>ATCC 33530 / DSM 19775 / NCTC 10195 / G37</strain>
    </source>
</reference>
<dbReference type="EMBL" id="L43967">
    <property type="protein sequence ID" value="AAC71310.1"/>
    <property type="molecule type" value="Genomic_DNA"/>
</dbReference>
<dbReference type="PIR" id="B64210">
    <property type="entry name" value="B64210"/>
</dbReference>
<dbReference type="SMR" id="P47338"/>
<dbReference type="FunCoup" id="P47338">
    <property type="interactions" value="171"/>
</dbReference>
<dbReference type="STRING" id="243273.MG_092"/>
<dbReference type="KEGG" id="mge:MG_092"/>
<dbReference type="eggNOG" id="COG0238">
    <property type="taxonomic scope" value="Bacteria"/>
</dbReference>
<dbReference type="HOGENOM" id="CLU_148710_0_1_14"/>
<dbReference type="InParanoid" id="P47338"/>
<dbReference type="Proteomes" id="UP000000807">
    <property type="component" value="Chromosome"/>
</dbReference>
<dbReference type="GO" id="GO:0022627">
    <property type="term" value="C:cytosolic small ribosomal subunit"/>
    <property type="evidence" value="ECO:0000318"/>
    <property type="project" value="GO_Central"/>
</dbReference>
<dbReference type="GO" id="GO:0070181">
    <property type="term" value="F:small ribosomal subunit rRNA binding"/>
    <property type="evidence" value="ECO:0000318"/>
    <property type="project" value="GO_Central"/>
</dbReference>
<dbReference type="GO" id="GO:0003735">
    <property type="term" value="F:structural constituent of ribosome"/>
    <property type="evidence" value="ECO:0000318"/>
    <property type="project" value="GO_Central"/>
</dbReference>
<dbReference type="GO" id="GO:0006412">
    <property type="term" value="P:translation"/>
    <property type="evidence" value="ECO:0000318"/>
    <property type="project" value="GO_Central"/>
</dbReference>
<dbReference type="FunFam" id="4.10.640.10:FF:000016">
    <property type="entry name" value="30S ribosomal protein S18"/>
    <property type="match status" value="1"/>
</dbReference>
<dbReference type="Gene3D" id="4.10.640.10">
    <property type="entry name" value="Ribosomal protein S18"/>
    <property type="match status" value="1"/>
</dbReference>
<dbReference type="HAMAP" id="MF_00270">
    <property type="entry name" value="Ribosomal_bS18"/>
    <property type="match status" value="1"/>
</dbReference>
<dbReference type="InterPro" id="IPR001648">
    <property type="entry name" value="Ribosomal_bS18"/>
</dbReference>
<dbReference type="InterPro" id="IPR018275">
    <property type="entry name" value="Ribosomal_bS18_CS"/>
</dbReference>
<dbReference type="InterPro" id="IPR036870">
    <property type="entry name" value="Ribosomal_bS18_sf"/>
</dbReference>
<dbReference type="NCBIfam" id="TIGR00165">
    <property type="entry name" value="S18"/>
    <property type="match status" value="1"/>
</dbReference>
<dbReference type="PANTHER" id="PTHR13479">
    <property type="entry name" value="30S RIBOSOMAL PROTEIN S18"/>
    <property type="match status" value="1"/>
</dbReference>
<dbReference type="PANTHER" id="PTHR13479:SF40">
    <property type="entry name" value="SMALL RIBOSOMAL SUBUNIT PROTEIN BS18M"/>
    <property type="match status" value="1"/>
</dbReference>
<dbReference type="Pfam" id="PF01084">
    <property type="entry name" value="Ribosomal_S18"/>
    <property type="match status" value="1"/>
</dbReference>
<dbReference type="PRINTS" id="PR00974">
    <property type="entry name" value="RIBOSOMALS18"/>
</dbReference>
<dbReference type="SUPFAM" id="SSF46911">
    <property type="entry name" value="Ribosomal protein S18"/>
    <property type="match status" value="1"/>
</dbReference>
<dbReference type="PROSITE" id="PS00057">
    <property type="entry name" value="RIBOSOMAL_S18"/>
    <property type="match status" value="1"/>
</dbReference>
<accession>P47338</accession>
<name>RS18_MYCGE</name>
<comment type="function">
    <text evidence="1">Binds as a heterodimer with protein bS6 to the central domain of the 16S rRNA, where it helps stabilize the platform of the 30S subunit.</text>
</comment>
<comment type="subunit">
    <text evidence="1">Part of the 30S ribosomal subunit. Forms a tight heterodimer with protein bS6.</text>
</comment>
<comment type="similarity">
    <text evidence="1">Belongs to the bacterial ribosomal protein bS18 family.</text>
</comment>
<proteinExistence type="inferred from homology"/>
<protein>
    <recommendedName>
        <fullName evidence="1">Small ribosomal subunit protein bS18</fullName>
    </recommendedName>
    <alternativeName>
        <fullName evidence="3">30S ribosomal protein S18</fullName>
    </alternativeName>
</protein>
<organism>
    <name type="scientific">Mycoplasma genitalium (strain ATCC 33530 / DSM 19775 / NCTC 10195 / G37)</name>
    <name type="common">Mycoplasmoides genitalium</name>
    <dbReference type="NCBI Taxonomy" id="243273"/>
    <lineage>
        <taxon>Bacteria</taxon>
        <taxon>Bacillati</taxon>
        <taxon>Mycoplasmatota</taxon>
        <taxon>Mycoplasmoidales</taxon>
        <taxon>Mycoplasmoidaceae</taxon>
        <taxon>Mycoplasmoides</taxon>
    </lineage>
</organism>
<gene>
    <name evidence="1" type="primary">rpsR</name>
    <name evidence="1" type="synonym">rps18</name>
    <name type="ordered locus">MG092</name>
</gene>
<keyword id="KW-1185">Reference proteome</keyword>
<keyword id="KW-0687">Ribonucleoprotein</keyword>
<keyword id="KW-0689">Ribosomal protein</keyword>
<keyword id="KW-0694">RNA-binding</keyword>
<keyword id="KW-0699">rRNA-binding</keyword>
<sequence length="105" mass="12463">MMINKEQDLNQLETNQEQSVEQNQTDEKRKPKPNFKRAKKYCRFCAIGQLRIDFIDDLEAIKRFLSPYAKINPRRITGNCNMHQRHVANALKRARYLALVPFIKD</sequence>